<feature type="chain" id="PRO_0000316840" description="Aminoacyl tRNA synthase complex-interacting multifunctional protein 2">
    <location>
        <begin position="1"/>
        <end position="320"/>
    </location>
</feature>
<feature type="domain" description="GST C-terminal">
    <location>
        <begin position="220"/>
        <end position="317"/>
    </location>
</feature>
<feature type="region of interest" description="Interaction with PRKN" evidence="1">
    <location>
        <begin position="82"/>
        <end position="162"/>
    </location>
</feature>
<feature type="region of interest" description="Interaction with TP53" evidence="1">
    <location>
        <begin position="162"/>
        <end position="225"/>
    </location>
</feature>
<feature type="modified residue" description="Phosphoserine" evidence="3">
    <location>
        <position position="36"/>
    </location>
</feature>
<accession>Q0II26</accession>
<reference key="1">
    <citation type="submission" date="2006-08" db="EMBL/GenBank/DDBJ databases">
        <authorList>
            <consortium name="NIH - Mammalian Gene Collection (MGC) project"/>
        </authorList>
    </citation>
    <scope>NUCLEOTIDE SEQUENCE [LARGE SCALE MRNA]</scope>
    <source>
        <strain>Hereford</strain>
        <tissue>Hypothalamus</tissue>
    </source>
</reference>
<name>AIMP2_BOVIN</name>
<sequence>MPMYQVKPYHEGSGSLRVELPTCMYRLPNVHGRTGSPAPSADHVQEASDPSLQALESHQDDILKRLYELKAAVDGLSKMIQTPDADLDVTNIIQADEPAALSTSTVDLNAMLGQDHGALKDIVINANPASPPLSLLVLHRLLCDHYKVLSSVHTHSAVRSVPANLLQCFGEQTRQQPRHEYQLGFTLIWKDVPKTQMKFSVQTMCPIEGEGNIARFLFSLFGQKQDAVNLTLIDSWVDIAIFQLKEGSSKEKAAVFRSMNSALGKTPWLVGDELTVADVVLWSVLRQTGGCGGMAPANVQKWMQACENLAPFHTALKLLQ</sequence>
<comment type="function">
    <text evidence="2">Required for assembly and stability of the aminoacyl-tRNA synthase complex. Mediates ubiquitination and degradation of FUBP1, a transcriptional activator of MYC, leading to MYC down-regulation which is required for aveolar type II cell differentiation. Blocks MDM2-mediated ubiquitination and degradation of p53/TP53. Functions as a proapoptotic factor.</text>
</comment>
<comment type="subunit">
    <text evidence="2">Part of the multisynthetase complex (MSC), a multisubunit complex that groups tRNA ligases for Arg (RARS1), Asp (DARS1), Gln (QARS1), Ile (IARS1), Leu (LARS1), Lys (KARS1), Met (MARS1) the bifunctional ligase for Glu and Pro (EPRS1) and the auxiliary subunits AIMP1/p43, AIMP2/p38 and EEF1E1/p18. Interacts (via N-terminus) with KARS1. Interacts with EPRS1. Forms a linear complex that contains MARS1, EEF1E1, EPRS1 and AIMP2 that is at the core of the multisubunit complex. Binds FUBP1 (via C-terminus). Interacts in both its unphosphorylated and phosphorylated forms with p53/TP53 (via N-terminus) in the nucleus following UV irradiation. Interacts (via N-terminus) with PRKN/parkin (via first RING-type domain). Interacts with TARS3.</text>
</comment>
<comment type="subcellular location">
    <subcellularLocation>
        <location evidence="3">Cytoplasm</location>
        <location evidence="3">Cytosol</location>
    </subcellularLocation>
    <subcellularLocation>
        <location evidence="3">Nucleus</location>
    </subcellularLocation>
    <text evidence="3">Following DNA damage, dissociates from the aminoacyl-tRNA synthase complex and translocates from the cytoplasm to the nucleus.</text>
</comment>
<comment type="PTM">
    <text evidence="1">Phosphorylated on serine residues in response to UV irradiation.</text>
</comment>
<comment type="PTM">
    <text evidence="1">Ubiquitinated by PRKN, leading to its degradation by the proteasome.</text>
</comment>
<protein>
    <recommendedName>
        <fullName>Aminoacyl tRNA synthase complex-interacting multifunctional protein 2</fullName>
    </recommendedName>
    <alternativeName>
        <fullName>Multisynthase complex auxiliary component p38</fullName>
    </alternativeName>
    <alternativeName>
        <fullName>Protein JTV-1</fullName>
    </alternativeName>
</protein>
<keyword id="KW-0053">Apoptosis</keyword>
<keyword id="KW-0963">Cytoplasm</keyword>
<keyword id="KW-0217">Developmental protein</keyword>
<keyword id="KW-0221">Differentiation</keyword>
<keyword id="KW-0539">Nucleus</keyword>
<keyword id="KW-0597">Phosphoprotein</keyword>
<keyword id="KW-0648">Protein biosynthesis</keyword>
<keyword id="KW-1185">Reference proteome</keyword>
<keyword id="KW-0832">Ubl conjugation</keyword>
<dbReference type="EMBL" id="BC122837">
    <property type="protein sequence ID" value="AAI22838.1"/>
    <property type="molecule type" value="mRNA"/>
</dbReference>
<dbReference type="RefSeq" id="NP_001069281.1">
    <property type="nucleotide sequence ID" value="NM_001075813.2"/>
</dbReference>
<dbReference type="SMR" id="Q0II26"/>
<dbReference type="FunCoup" id="Q0II26">
    <property type="interactions" value="2132"/>
</dbReference>
<dbReference type="STRING" id="9913.ENSBTAP00000009687"/>
<dbReference type="PaxDb" id="9913-ENSBTAP00000009687"/>
<dbReference type="PeptideAtlas" id="Q0II26"/>
<dbReference type="Ensembl" id="ENSBTAT00000009687.5">
    <property type="protein sequence ID" value="ENSBTAP00000009687.4"/>
    <property type="gene ID" value="ENSBTAG00000007367.6"/>
</dbReference>
<dbReference type="GeneID" id="520979"/>
<dbReference type="KEGG" id="bta:520979"/>
<dbReference type="CTD" id="7965"/>
<dbReference type="VEuPathDB" id="HostDB:ENSBTAG00000007367"/>
<dbReference type="VGNC" id="VGNC:25766">
    <property type="gene designation" value="AIMP2"/>
</dbReference>
<dbReference type="eggNOG" id="ENOG502QUNJ">
    <property type="taxonomic scope" value="Eukaryota"/>
</dbReference>
<dbReference type="GeneTree" id="ENSGT00390000015826"/>
<dbReference type="HOGENOM" id="CLU_076114_0_0_1"/>
<dbReference type="InParanoid" id="Q0II26"/>
<dbReference type="OMA" id="LCQHYRV"/>
<dbReference type="OrthoDB" id="2309723at2759"/>
<dbReference type="TreeFam" id="TF326322"/>
<dbReference type="Reactome" id="R-BTA-9856649">
    <property type="pathway name" value="Transcriptional and post-translational regulation of MITF-M expression and activity"/>
</dbReference>
<dbReference type="Proteomes" id="UP000009136">
    <property type="component" value="Chromosome 25"/>
</dbReference>
<dbReference type="Bgee" id="ENSBTAG00000007367">
    <property type="expression patterns" value="Expressed in biceps femoris and 104 other cell types or tissues"/>
</dbReference>
<dbReference type="GO" id="GO:0017101">
    <property type="term" value="C:aminoacyl-tRNA synthetase multienzyme complex"/>
    <property type="evidence" value="ECO:0000250"/>
    <property type="project" value="UniProtKB"/>
</dbReference>
<dbReference type="GO" id="GO:0005829">
    <property type="term" value="C:cytosol"/>
    <property type="evidence" value="ECO:0007669"/>
    <property type="project" value="UniProtKB-SubCell"/>
</dbReference>
<dbReference type="GO" id="GO:0005634">
    <property type="term" value="C:nucleus"/>
    <property type="evidence" value="ECO:0007669"/>
    <property type="project" value="UniProtKB-SubCell"/>
</dbReference>
<dbReference type="GO" id="GO:0060090">
    <property type="term" value="F:molecular adaptor activity"/>
    <property type="evidence" value="ECO:0007669"/>
    <property type="project" value="Ensembl"/>
</dbReference>
<dbReference type="GO" id="GO:0006915">
    <property type="term" value="P:apoptotic process"/>
    <property type="evidence" value="ECO:0007669"/>
    <property type="project" value="UniProtKB-KW"/>
</dbReference>
<dbReference type="GO" id="GO:0008285">
    <property type="term" value="P:negative regulation of cell population proliferation"/>
    <property type="evidence" value="ECO:0007669"/>
    <property type="project" value="Ensembl"/>
</dbReference>
<dbReference type="GO" id="GO:0031398">
    <property type="term" value="P:positive regulation of protein ubiquitination"/>
    <property type="evidence" value="ECO:0007669"/>
    <property type="project" value="Ensembl"/>
</dbReference>
<dbReference type="GO" id="GO:0016567">
    <property type="term" value="P:protein ubiquitination"/>
    <property type="evidence" value="ECO:0007669"/>
    <property type="project" value="Ensembl"/>
</dbReference>
<dbReference type="GO" id="GO:0065003">
    <property type="term" value="P:protein-containing complex assembly"/>
    <property type="evidence" value="ECO:0007669"/>
    <property type="project" value="Ensembl"/>
</dbReference>
<dbReference type="GO" id="GO:0006412">
    <property type="term" value="P:translation"/>
    <property type="evidence" value="ECO:0007669"/>
    <property type="project" value="UniProtKB-KW"/>
</dbReference>
<dbReference type="GO" id="GO:0060510">
    <property type="term" value="P:type II pneumocyte differentiation"/>
    <property type="evidence" value="ECO:0007669"/>
    <property type="project" value="Ensembl"/>
</dbReference>
<dbReference type="CDD" id="cd03200">
    <property type="entry name" value="GST_C_AIMP2"/>
    <property type="match status" value="1"/>
</dbReference>
<dbReference type="FunFam" id="1.20.1050.130:FF:000002">
    <property type="entry name" value="aminoacyl tRNA synthase complex-interacting multifunctional protein 2 isoform X2"/>
    <property type="match status" value="1"/>
</dbReference>
<dbReference type="Gene3D" id="1.20.1050.130">
    <property type="match status" value="1"/>
</dbReference>
<dbReference type="InterPro" id="IPR042360">
    <property type="entry name" value="AIMP2"/>
</dbReference>
<dbReference type="InterPro" id="IPR031889">
    <property type="entry name" value="AIMP2_LysRS-bd"/>
</dbReference>
<dbReference type="InterPro" id="IPR041503">
    <property type="entry name" value="AIMP2_thioredoxin"/>
</dbReference>
<dbReference type="InterPro" id="IPR036282">
    <property type="entry name" value="Glutathione-S-Trfase_C_sf"/>
</dbReference>
<dbReference type="InterPro" id="IPR004046">
    <property type="entry name" value="GST_C"/>
</dbReference>
<dbReference type="PANTHER" id="PTHR13438">
    <property type="entry name" value="AMINOACYL TRNA SYNTHASE COMPLEX-INTERACTING MULTIFUNCTIONAL PROTEIN"/>
    <property type="match status" value="1"/>
</dbReference>
<dbReference type="PANTHER" id="PTHR13438:SF2">
    <property type="entry name" value="AMINOACYL TRNA SYNTHASE COMPLEX-INTERACTING MULTIFUNCTIONAL PROTEIN 2"/>
    <property type="match status" value="1"/>
</dbReference>
<dbReference type="Pfam" id="PF16780">
    <property type="entry name" value="AIMP2_LysRS_bd"/>
    <property type="match status" value="1"/>
</dbReference>
<dbReference type="Pfam" id="PF00043">
    <property type="entry name" value="GST_C"/>
    <property type="match status" value="1"/>
</dbReference>
<dbReference type="Pfam" id="PF18569">
    <property type="entry name" value="Thioredoxin_16"/>
    <property type="match status" value="1"/>
</dbReference>
<dbReference type="SUPFAM" id="SSF47616">
    <property type="entry name" value="GST C-terminal domain-like"/>
    <property type="match status" value="1"/>
</dbReference>
<evidence type="ECO:0000250" key="1"/>
<evidence type="ECO:0000250" key="2">
    <source>
        <dbReference type="UniProtKB" id="Q13155"/>
    </source>
</evidence>
<evidence type="ECO:0000250" key="3">
    <source>
        <dbReference type="UniProtKB" id="Q8R010"/>
    </source>
</evidence>
<organism>
    <name type="scientific">Bos taurus</name>
    <name type="common">Bovine</name>
    <dbReference type="NCBI Taxonomy" id="9913"/>
    <lineage>
        <taxon>Eukaryota</taxon>
        <taxon>Metazoa</taxon>
        <taxon>Chordata</taxon>
        <taxon>Craniata</taxon>
        <taxon>Vertebrata</taxon>
        <taxon>Euteleostomi</taxon>
        <taxon>Mammalia</taxon>
        <taxon>Eutheria</taxon>
        <taxon>Laurasiatheria</taxon>
        <taxon>Artiodactyla</taxon>
        <taxon>Ruminantia</taxon>
        <taxon>Pecora</taxon>
        <taxon>Bovidae</taxon>
        <taxon>Bovinae</taxon>
        <taxon>Bos</taxon>
    </lineage>
</organism>
<gene>
    <name type="primary">AIMP2</name>
    <name type="synonym">JTV1</name>
</gene>
<proteinExistence type="evidence at transcript level"/>